<gene>
    <name evidence="1" type="primary">kdsB</name>
    <name type="ordered locus">SSON_0920</name>
</gene>
<accession>Q3Z3K3</accession>
<protein>
    <recommendedName>
        <fullName evidence="1">3-deoxy-manno-octulosonate cytidylyltransferase</fullName>
        <ecNumber evidence="1">2.7.7.38</ecNumber>
    </recommendedName>
    <alternativeName>
        <fullName evidence="1">CMP-2-keto-3-deoxyoctulosonic acid synthase</fullName>
        <shortName evidence="1">CKS</shortName>
        <shortName evidence="1">CMP-KDO synthase</shortName>
    </alternativeName>
</protein>
<feature type="chain" id="PRO_1000003385" description="3-deoxy-manno-octulosonate cytidylyltransferase">
    <location>
        <begin position="1"/>
        <end position="248"/>
    </location>
</feature>
<dbReference type="EC" id="2.7.7.38" evidence="1"/>
<dbReference type="EMBL" id="CP000038">
    <property type="protein sequence ID" value="AAZ87659.1"/>
    <property type="molecule type" value="Genomic_DNA"/>
</dbReference>
<dbReference type="RefSeq" id="WP_000011601.1">
    <property type="nucleotide sequence ID" value="NC_007384.1"/>
</dbReference>
<dbReference type="SMR" id="Q3Z3K3"/>
<dbReference type="GeneID" id="93776497"/>
<dbReference type="KEGG" id="ssn:SSON_0920"/>
<dbReference type="HOGENOM" id="CLU_065038_1_0_6"/>
<dbReference type="UniPathway" id="UPA00030"/>
<dbReference type="UniPathway" id="UPA00358">
    <property type="reaction ID" value="UER00476"/>
</dbReference>
<dbReference type="Proteomes" id="UP000002529">
    <property type="component" value="Chromosome"/>
</dbReference>
<dbReference type="GO" id="GO:0005829">
    <property type="term" value="C:cytosol"/>
    <property type="evidence" value="ECO:0007669"/>
    <property type="project" value="TreeGrafter"/>
</dbReference>
<dbReference type="GO" id="GO:0008690">
    <property type="term" value="F:3-deoxy-manno-octulosonate cytidylyltransferase activity"/>
    <property type="evidence" value="ECO:0007669"/>
    <property type="project" value="UniProtKB-UniRule"/>
</dbReference>
<dbReference type="GO" id="GO:0033468">
    <property type="term" value="P:CMP-keto-3-deoxy-D-manno-octulosonic acid biosynthetic process"/>
    <property type="evidence" value="ECO:0007669"/>
    <property type="project" value="UniProtKB-UniRule"/>
</dbReference>
<dbReference type="GO" id="GO:0009103">
    <property type="term" value="P:lipopolysaccharide biosynthetic process"/>
    <property type="evidence" value="ECO:0007669"/>
    <property type="project" value="UniProtKB-UniRule"/>
</dbReference>
<dbReference type="CDD" id="cd02517">
    <property type="entry name" value="CMP-KDO-Synthetase"/>
    <property type="match status" value="1"/>
</dbReference>
<dbReference type="FunFam" id="3.90.550.10:FF:000011">
    <property type="entry name" value="3-deoxy-manno-octulosonate cytidylyltransferase"/>
    <property type="match status" value="1"/>
</dbReference>
<dbReference type="Gene3D" id="3.90.550.10">
    <property type="entry name" value="Spore Coat Polysaccharide Biosynthesis Protein SpsA, Chain A"/>
    <property type="match status" value="1"/>
</dbReference>
<dbReference type="HAMAP" id="MF_00057">
    <property type="entry name" value="KdsB"/>
    <property type="match status" value="1"/>
</dbReference>
<dbReference type="InterPro" id="IPR003329">
    <property type="entry name" value="Cytidylyl_trans"/>
</dbReference>
<dbReference type="InterPro" id="IPR004528">
    <property type="entry name" value="KdsB"/>
</dbReference>
<dbReference type="InterPro" id="IPR029044">
    <property type="entry name" value="Nucleotide-diphossugar_trans"/>
</dbReference>
<dbReference type="NCBIfam" id="TIGR00466">
    <property type="entry name" value="kdsB"/>
    <property type="match status" value="1"/>
</dbReference>
<dbReference type="NCBIfam" id="NF003950">
    <property type="entry name" value="PRK05450.1-3"/>
    <property type="match status" value="1"/>
</dbReference>
<dbReference type="NCBIfam" id="NF003952">
    <property type="entry name" value="PRK05450.1-5"/>
    <property type="match status" value="1"/>
</dbReference>
<dbReference type="NCBIfam" id="NF009905">
    <property type="entry name" value="PRK13368.1"/>
    <property type="match status" value="1"/>
</dbReference>
<dbReference type="PANTHER" id="PTHR42866">
    <property type="entry name" value="3-DEOXY-MANNO-OCTULOSONATE CYTIDYLYLTRANSFERASE"/>
    <property type="match status" value="1"/>
</dbReference>
<dbReference type="PANTHER" id="PTHR42866:SF2">
    <property type="entry name" value="3-DEOXY-MANNO-OCTULOSONATE CYTIDYLYLTRANSFERASE, MITOCHONDRIAL"/>
    <property type="match status" value="1"/>
</dbReference>
<dbReference type="Pfam" id="PF02348">
    <property type="entry name" value="CTP_transf_3"/>
    <property type="match status" value="1"/>
</dbReference>
<dbReference type="SUPFAM" id="SSF53448">
    <property type="entry name" value="Nucleotide-diphospho-sugar transferases"/>
    <property type="match status" value="1"/>
</dbReference>
<comment type="function">
    <text evidence="1">Activates KDO (a required 8-carbon sugar) for incorporation into bacterial lipopolysaccharide in Gram-negative bacteria.</text>
</comment>
<comment type="catalytic activity">
    <reaction evidence="1">
        <text>3-deoxy-alpha-D-manno-oct-2-ulosonate + CTP = CMP-3-deoxy-beta-D-manno-octulosonate + diphosphate</text>
        <dbReference type="Rhea" id="RHEA:23448"/>
        <dbReference type="ChEBI" id="CHEBI:33019"/>
        <dbReference type="ChEBI" id="CHEBI:37563"/>
        <dbReference type="ChEBI" id="CHEBI:85986"/>
        <dbReference type="ChEBI" id="CHEBI:85987"/>
        <dbReference type="EC" id="2.7.7.38"/>
    </reaction>
</comment>
<comment type="pathway">
    <text evidence="1">Nucleotide-sugar biosynthesis; CMP-3-deoxy-D-manno-octulosonate biosynthesis; CMP-3-deoxy-D-manno-octulosonate from 3-deoxy-D-manno-octulosonate and CTP: step 1/1.</text>
</comment>
<comment type="pathway">
    <text evidence="1">Bacterial outer membrane biogenesis; lipopolysaccharide biosynthesis.</text>
</comment>
<comment type="subcellular location">
    <subcellularLocation>
        <location evidence="1">Cytoplasm</location>
    </subcellularLocation>
</comment>
<comment type="similarity">
    <text evidence="1">Belongs to the KdsB family.</text>
</comment>
<organism>
    <name type="scientific">Shigella sonnei (strain Ss046)</name>
    <dbReference type="NCBI Taxonomy" id="300269"/>
    <lineage>
        <taxon>Bacteria</taxon>
        <taxon>Pseudomonadati</taxon>
        <taxon>Pseudomonadota</taxon>
        <taxon>Gammaproteobacteria</taxon>
        <taxon>Enterobacterales</taxon>
        <taxon>Enterobacteriaceae</taxon>
        <taxon>Shigella</taxon>
    </lineage>
</organism>
<sequence>MSFVVIIPARYASTRLPGKPLVDINGKPMIVHVLERARESGAERIIVATDHEDVARAVEAAGGEVCMTRADHQSGTERLAEVVEKCAFSDDTVIVNVQGDEPMIPATIIRQVADNLAQRQVGMATLAVPIHNAEEAFNPNAVKVVLDAEGYALYFSRATIPWDRDRFAEGLETVGDNFLRHLGIYGYRAGFIRRYVNWQASPLEHIEMLEQLRVLWYGEKIHVAVAQEVPGTGVDTPEDLERVRAEMR</sequence>
<proteinExistence type="inferred from homology"/>
<evidence type="ECO:0000255" key="1">
    <source>
        <dbReference type="HAMAP-Rule" id="MF_00057"/>
    </source>
</evidence>
<name>KDSB_SHISS</name>
<keyword id="KW-0963">Cytoplasm</keyword>
<keyword id="KW-0448">Lipopolysaccharide biosynthesis</keyword>
<keyword id="KW-0548">Nucleotidyltransferase</keyword>
<keyword id="KW-1185">Reference proteome</keyword>
<keyword id="KW-0808">Transferase</keyword>
<reference key="1">
    <citation type="journal article" date="2005" name="Nucleic Acids Res.">
        <title>Genome dynamics and diversity of Shigella species, the etiologic agents of bacillary dysentery.</title>
        <authorList>
            <person name="Yang F."/>
            <person name="Yang J."/>
            <person name="Zhang X."/>
            <person name="Chen L."/>
            <person name="Jiang Y."/>
            <person name="Yan Y."/>
            <person name="Tang X."/>
            <person name="Wang J."/>
            <person name="Xiong Z."/>
            <person name="Dong J."/>
            <person name="Xue Y."/>
            <person name="Zhu Y."/>
            <person name="Xu X."/>
            <person name="Sun L."/>
            <person name="Chen S."/>
            <person name="Nie H."/>
            <person name="Peng J."/>
            <person name="Xu J."/>
            <person name="Wang Y."/>
            <person name="Yuan Z."/>
            <person name="Wen Y."/>
            <person name="Yao Z."/>
            <person name="Shen Y."/>
            <person name="Qiang B."/>
            <person name="Hou Y."/>
            <person name="Yu J."/>
            <person name="Jin Q."/>
        </authorList>
    </citation>
    <scope>NUCLEOTIDE SEQUENCE [LARGE SCALE GENOMIC DNA]</scope>
    <source>
        <strain>Ss046</strain>
    </source>
</reference>